<feature type="chain" id="PRO_1000044708" description="Altronate oxidoreductase">
    <location>
        <begin position="1"/>
        <end position="482"/>
    </location>
</feature>
<feature type="binding site" evidence="1">
    <location>
        <begin position="18"/>
        <end position="29"/>
    </location>
    <ligand>
        <name>NAD(+)</name>
        <dbReference type="ChEBI" id="CHEBI:57540"/>
    </ligand>
</feature>
<protein>
    <recommendedName>
        <fullName evidence="1">Altronate oxidoreductase</fullName>
        <ecNumber evidence="1">1.1.1.58</ecNumber>
    </recommendedName>
    <alternativeName>
        <fullName evidence="1">Tagaturonate dehydrogenase</fullName>
    </alternativeName>
    <alternativeName>
        <fullName evidence="1">Tagaturonate reductase</fullName>
    </alternativeName>
</protein>
<dbReference type="EC" id="1.1.1.58" evidence="1"/>
<dbReference type="EMBL" id="CP000038">
    <property type="protein sequence ID" value="AAZ88305.1"/>
    <property type="molecule type" value="Genomic_DNA"/>
</dbReference>
<dbReference type="RefSeq" id="WP_000854612.1">
    <property type="nucleotide sequence ID" value="NC_007384.1"/>
</dbReference>
<dbReference type="SMR" id="Q3Z1Q7"/>
<dbReference type="GeneID" id="93775685"/>
<dbReference type="KEGG" id="ssn:SSON_1607"/>
<dbReference type="HOGENOM" id="CLU_027324_1_0_6"/>
<dbReference type="UniPathway" id="UPA00246"/>
<dbReference type="Proteomes" id="UP000002529">
    <property type="component" value="Chromosome"/>
</dbReference>
<dbReference type="GO" id="GO:0005829">
    <property type="term" value="C:cytosol"/>
    <property type="evidence" value="ECO:0007669"/>
    <property type="project" value="TreeGrafter"/>
</dbReference>
<dbReference type="GO" id="GO:0008926">
    <property type="term" value="F:mannitol-1-phosphate 5-dehydrogenase activity"/>
    <property type="evidence" value="ECO:0007669"/>
    <property type="project" value="TreeGrafter"/>
</dbReference>
<dbReference type="GO" id="GO:0009026">
    <property type="term" value="F:tagaturonate reductase activity"/>
    <property type="evidence" value="ECO:0007669"/>
    <property type="project" value="UniProtKB-UniRule"/>
</dbReference>
<dbReference type="GO" id="GO:0019698">
    <property type="term" value="P:D-galacturonate catabolic process"/>
    <property type="evidence" value="ECO:0007669"/>
    <property type="project" value="TreeGrafter"/>
</dbReference>
<dbReference type="GO" id="GO:0019592">
    <property type="term" value="P:mannitol catabolic process"/>
    <property type="evidence" value="ECO:0007669"/>
    <property type="project" value="TreeGrafter"/>
</dbReference>
<dbReference type="FunFam" id="1.10.1040.10:FF:000018">
    <property type="entry name" value="Altronate oxidoreductase"/>
    <property type="match status" value="1"/>
</dbReference>
<dbReference type="FunFam" id="3.40.50.720:FF:000153">
    <property type="entry name" value="Altronate oxidoreductase"/>
    <property type="match status" value="1"/>
</dbReference>
<dbReference type="Gene3D" id="1.10.1040.10">
    <property type="entry name" value="N-(1-d-carboxylethyl)-l-norvaline Dehydrogenase, domain 2"/>
    <property type="match status" value="1"/>
</dbReference>
<dbReference type="Gene3D" id="3.40.50.720">
    <property type="entry name" value="NAD(P)-binding Rossmann-like Domain"/>
    <property type="match status" value="1"/>
</dbReference>
<dbReference type="HAMAP" id="MF_00670">
    <property type="entry name" value="Altron_oxidoreduct"/>
    <property type="match status" value="1"/>
</dbReference>
<dbReference type="InterPro" id="IPR008927">
    <property type="entry name" value="6-PGluconate_DH-like_C_sf"/>
</dbReference>
<dbReference type="InterPro" id="IPR013328">
    <property type="entry name" value="6PGD_dom2"/>
</dbReference>
<dbReference type="InterPro" id="IPR023668">
    <property type="entry name" value="Altronate_OxRdtase"/>
</dbReference>
<dbReference type="InterPro" id="IPR013118">
    <property type="entry name" value="Mannitol_DH_C"/>
</dbReference>
<dbReference type="InterPro" id="IPR013131">
    <property type="entry name" value="Mannitol_DH_N"/>
</dbReference>
<dbReference type="InterPro" id="IPR036291">
    <property type="entry name" value="NAD(P)-bd_dom_sf"/>
</dbReference>
<dbReference type="NCBIfam" id="NF002969">
    <property type="entry name" value="PRK03643.1"/>
    <property type="match status" value="1"/>
</dbReference>
<dbReference type="PANTHER" id="PTHR30524:SF0">
    <property type="entry name" value="ALTRONATE OXIDOREDUCTASE-RELATED"/>
    <property type="match status" value="1"/>
</dbReference>
<dbReference type="PANTHER" id="PTHR30524">
    <property type="entry name" value="MANNITOL-1-PHOSPHATE 5-DEHYDROGENASE"/>
    <property type="match status" value="1"/>
</dbReference>
<dbReference type="Pfam" id="PF01232">
    <property type="entry name" value="Mannitol_dh"/>
    <property type="match status" value="1"/>
</dbReference>
<dbReference type="Pfam" id="PF08125">
    <property type="entry name" value="Mannitol_dh_C"/>
    <property type="match status" value="1"/>
</dbReference>
<dbReference type="SUPFAM" id="SSF48179">
    <property type="entry name" value="6-phosphogluconate dehydrogenase C-terminal domain-like"/>
    <property type="match status" value="1"/>
</dbReference>
<dbReference type="SUPFAM" id="SSF51735">
    <property type="entry name" value="NAD(P)-binding Rossmann-fold domains"/>
    <property type="match status" value="1"/>
</dbReference>
<sequence>MKTLNRRDFPGAQYPERIIQFGEGNFLRAFVDWQIDLLNEHTDLNSGVVVVRPIETSFPPSLSTQDGLYTTIIRGLNEKGEAVSDARLIRSVNREISVYSEYDEFLKLAHNPEMRFVFSNTTEAGISYHAGDKFDDAPAISYPAKLTRLLFERFSHFNGALDKGWIIIPCELIDYNGDALRELVLRYAQEWALPEAFIQWLDQANSFCSTLVDRIVTGYPRDEVAKLEEELGYHDGFLDTAEHFYLFVIQGPKSLATELRLDKYPLNVLIVDDIKPYKERKVAILNGAHTALVPVAFQAGLDTVGEAMNDAEICAFVEKAIYEEIIPVLDLPRDELESFASAVTGRFRNPYKHQLLSIALNGMTKFRTRILPQLLAGQKANGTLPARLTFALAALIAFYRGERNGETYPVQDDAHWLERYQQLWSQHRDHVIGTQELVAIVLAEKDHWEQDLTQVPGLVEQVANDLDAILEKGMREAVRPLC</sequence>
<reference key="1">
    <citation type="journal article" date="2005" name="Nucleic Acids Res.">
        <title>Genome dynamics and diversity of Shigella species, the etiologic agents of bacillary dysentery.</title>
        <authorList>
            <person name="Yang F."/>
            <person name="Yang J."/>
            <person name="Zhang X."/>
            <person name="Chen L."/>
            <person name="Jiang Y."/>
            <person name="Yan Y."/>
            <person name="Tang X."/>
            <person name="Wang J."/>
            <person name="Xiong Z."/>
            <person name="Dong J."/>
            <person name="Xue Y."/>
            <person name="Zhu Y."/>
            <person name="Xu X."/>
            <person name="Sun L."/>
            <person name="Chen S."/>
            <person name="Nie H."/>
            <person name="Peng J."/>
            <person name="Xu J."/>
            <person name="Wang Y."/>
            <person name="Yuan Z."/>
            <person name="Wen Y."/>
            <person name="Yao Z."/>
            <person name="Shen Y."/>
            <person name="Qiang B."/>
            <person name="Hou Y."/>
            <person name="Yu J."/>
            <person name="Jin Q."/>
        </authorList>
    </citation>
    <scope>NUCLEOTIDE SEQUENCE [LARGE SCALE GENOMIC DNA]</scope>
    <source>
        <strain>Ss046</strain>
    </source>
</reference>
<accession>Q3Z1Q7</accession>
<keyword id="KW-0520">NAD</keyword>
<keyword id="KW-0560">Oxidoreductase</keyword>
<keyword id="KW-1185">Reference proteome</keyword>
<name>UXAB_SHISS</name>
<organism>
    <name type="scientific">Shigella sonnei (strain Ss046)</name>
    <dbReference type="NCBI Taxonomy" id="300269"/>
    <lineage>
        <taxon>Bacteria</taxon>
        <taxon>Pseudomonadati</taxon>
        <taxon>Pseudomonadota</taxon>
        <taxon>Gammaproteobacteria</taxon>
        <taxon>Enterobacterales</taxon>
        <taxon>Enterobacteriaceae</taxon>
        <taxon>Shigella</taxon>
    </lineage>
</organism>
<proteinExistence type="inferred from homology"/>
<gene>
    <name evidence="1" type="primary">uxaB</name>
    <name type="ordered locus">SSON_1607</name>
</gene>
<comment type="catalytic activity">
    <reaction evidence="1">
        <text>D-altronate + NAD(+) = keto-D-tagaturonate + NADH + H(+)</text>
        <dbReference type="Rhea" id="RHEA:17813"/>
        <dbReference type="ChEBI" id="CHEBI:15378"/>
        <dbReference type="ChEBI" id="CHEBI:17360"/>
        <dbReference type="ChEBI" id="CHEBI:17886"/>
        <dbReference type="ChEBI" id="CHEBI:57540"/>
        <dbReference type="ChEBI" id="CHEBI:57945"/>
        <dbReference type="EC" id="1.1.1.58"/>
    </reaction>
</comment>
<comment type="pathway">
    <text evidence="1">Carbohydrate metabolism; pentose and glucuronate interconversion.</text>
</comment>
<comment type="similarity">
    <text evidence="1">Belongs to the mannitol dehydrogenase family. UxaB subfamily.</text>
</comment>
<evidence type="ECO:0000255" key="1">
    <source>
        <dbReference type="HAMAP-Rule" id="MF_00670"/>
    </source>
</evidence>